<gene>
    <name evidence="2" type="primary">ahpD</name>
    <name type="ordered locus">MSMEG_4890</name>
    <name type="ordered locus">MSMEI_4765</name>
</gene>
<dbReference type="EC" id="1.11.1.28" evidence="2"/>
<dbReference type="EMBL" id="CP000480">
    <property type="protein sequence ID" value="ABK74352.1"/>
    <property type="molecule type" value="Genomic_DNA"/>
</dbReference>
<dbReference type="EMBL" id="CP001663">
    <property type="protein sequence ID" value="AFP41214.1"/>
    <property type="molecule type" value="Genomic_DNA"/>
</dbReference>
<dbReference type="EMBL" id="U43719">
    <property type="protein sequence ID" value="AAC44140.1"/>
    <property type="molecule type" value="Genomic_DNA"/>
</dbReference>
<dbReference type="RefSeq" id="WP_011730168.1">
    <property type="nucleotide sequence ID" value="NZ_SIJM01000024.1"/>
</dbReference>
<dbReference type="RefSeq" id="YP_889146.1">
    <property type="nucleotide sequence ID" value="NC_008596.1"/>
</dbReference>
<dbReference type="SMR" id="Q50441"/>
<dbReference type="STRING" id="246196.MSMEG_4890"/>
<dbReference type="PeroxiBase" id="4584">
    <property type="entry name" value="MsmAhpD"/>
</dbReference>
<dbReference type="PaxDb" id="246196-MSMEI_4765"/>
<dbReference type="GeneID" id="93459561"/>
<dbReference type="KEGG" id="msb:LJ00_24185"/>
<dbReference type="KEGG" id="msg:MSMEI_4765"/>
<dbReference type="KEGG" id="msm:MSMEG_4890"/>
<dbReference type="PATRIC" id="fig|246196.19.peg.4772"/>
<dbReference type="eggNOG" id="COG0599">
    <property type="taxonomic scope" value="Bacteria"/>
</dbReference>
<dbReference type="OrthoDB" id="9801997at2"/>
<dbReference type="Proteomes" id="UP000000757">
    <property type="component" value="Chromosome"/>
</dbReference>
<dbReference type="Proteomes" id="UP000006158">
    <property type="component" value="Chromosome"/>
</dbReference>
<dbReference type="GO" id="GO:0008785">
    <property type="term" value="F:alkyl hydroperoxide reductase activity"/>
    <property type="evidence" value="ECO:0007669"/>
    <property type="project" value="UniProtKB-UniRule"/>
</dbReference>
<dbReference type="GO" id="GO:0015036">
    <property type="term" value="F:disulfide oxidoreductase activity"/>
    <property type="evidence" value="ECO:0007669"/>
    <property type="project" value="TreeGrafter"/>
</dbReference>
<dbReference type="GO" id="GO:0032843">
    <property type="term" value="F:hydroperoxide reductase activity"/>
    <property type="evidence" value="ECO:0007669"/>
    <property type="project" value="InterPro"/>
</dbReference>
<dbReference type="GO" id="GO:0051920">
    <property type="term" value="F:peroxiredoxin activity"/>
    <property type="evidence" value="ECO:0007669"/>
    <property type="project" value="InterPro"/>
</dbReference>
<dbReference type="GO" id="GO:0045454">
    <property type="term" value="P:cell redox homeostasis"/>
    <property type="evidence" value="ECO:0007669"/>
    <property type="project" value="TreeGrafter"/>
</dbReference>
<dbReference type="GO" id="GO:0006979">
    <property type="term" value="P:response to oxidative stress"/>
    <property type="evidence" value="ECO:0007669"/>
    <property type="project" value="InterPro"/>
</dbReference>
<dbReference type="Gene3D" id="1.20.1290.10">
    <property type="entry name" value="AhpD-like"/>
    <property type="match status" value="1"/>
</dbReference>
<dbReference type="HAMAP" id="MF_01676">
    <property type="entry name" value="AhpD"/>
    <property type="match status" value="1"/>
</dbReference>
<dbReference type="InterPro" id="IPR004674">
    <property type="entry name" value="AhpD"/>
</dbReference>
<dbReference type="InterPro" id="IPR029032">
    <property type="entry name" value="AhpD-like"/>
</dbReference>
<dbReference type="InterPro" id="IPR004675">
    <property type="entry name" value="AhpD_core"/>
</dbReference>
<dbReference type="InterPro" id="IPR003779">
    <property type="entry name" value="CMD-like"/>
</dbReference>
<dbReference type="NCBIfam" id="TIGR00777">
    <property type="entry name" value="ahpD"/>
    <property type="match status" value="1"/>
</dbReference>
<dbReference type="NCBIfam" id="TIGR00778">
    <property type="entry name" value="ahpD_dom"/>
    <property type="match status" value="1"/>
</dbReference>
<dbReference type="PANTHER" id="PTHR33930">
    <property type="entry name" value="ALKYL HYDROPEROXIDE REDUCTASE AHPD"/>
    <property type="match status" value="1"/>
</dbReference>
<dbReference type="PANTHER" id="PTHR33930:SF7">
    <property type="entry name" value="ALKYL HYDROPEROXIDE REDUCTASE AHPD"/>
    <property type="match status" value="1"/>
</dbReference>
<dbReference type="Pfam" id="PF02627">
    <property type="entry name" value="CMD"/>
    <property type="match status" value="1"/>
</dbReference>
<dbReference type="SUPFAM" id="SSF69118">
    <property type="entry name" value="AhpD-like"/>
    <property type="match status" value="1"/>
</dbReference>
<feature type="chain" id="PRO_0000064506" description="Alkyl hydroperoxide reductase AhpD">
    <location>
        <begin position="1"/>
        <end position="177"/>
    </location>
</feature>
<feature type="active site" description="Proton donor" evidence="2">
    <location>
        <position position="130"/>
    </location>
</feature>
<feature type="active site" description="Cysteine sulfenic acid (-SOH) intermediate" evidence="2">
    <location>
        <position position="133"/>
    </location>
</feature>
<feature type="disulfide bond" evidence="1">
    <location>
        <begin position="130"/>
        <end position="133"/>
    </location>
</feature>
<feature type="disulfide bond" description="Interchain (with AhpC); in linked form" evidence="2">
    <location>
        <position position="133"/>
    </location>
</feature>
<feature type="sequence conflict" description="In Ref. 4; AAC44140." evidence="3" ref="4">
    <location>
        <begin position="28"/>
        <end position="30"/>
    </location>
</feature>
<comment type="function">
    <text evidence="2">Antioxidant protein with alkyl hydroperoxidase activity. Required for the reduction of the AhpC active site cysteine residues and for the regeneration of the AhpC enzyme activity.</text>
</comment>
<comment type="catalytic activity">
    <reaction evidence="2">
        <text>N(6)-[(R)-dihydrolipoyl]-L-lysyl-[lipoyl-carrier protein] + a hydroperoxide = N(6)-[(R)-lipoyl]-L-lysyl-[lipoyl-carrier protein] + an alcohol + H2O</text>
        <dbReference type="Rhea" id="RHEA:62636"/>
        <dbReference type="Rhea" id="RHEA-COMP:10502"/>
        <dbReference type="Rhea" id="RHEA-COMP:16355"/>
        <dbReference type="ChEBI" id="CHEBI:15377"/>
        <dbReference type="ChEBI" id="CHEBI:30879"/>
        <dbReference type="ChEBI" id="CHEBI:35924"/>
        <dbReference type="ChEBI" id="CHEBI:83099"/>
        <dbReference type="ChEBI" id="CHEBI:83100"/>
        <dbReference type="EC" id="1.11.1.28"/>
    </reaction>
</comment>
<comment type="subunit">
    <text evidence="2">Homotrimer.</text>
</comment>
<comment type="similarity">
    <text evidence="2">Belongs to the AhpD family.</text>
</comment>
<evidence type="ECO:0000250" key="1"/>
<evidence type="ECO:0000255" key="2">
    <source>
        <dbReference type="HAMAP-Rule" id="MF_01676"/>
    </source>
</evidence>
<evidence type="ECO:0000305" key="3"/>
<organism>
    <name type="scientific">Mycolicibacterium smegmatis (strain ATCC 700084 / mc(2)155)</name>
    <name type="common">Mycobacterium smegmatis</name>
    <dbReference type="NCBI Taxonomy" id="246196"/>
    <lineage>
        <taxon>Bacteria</taxon>
        <taxon>Bacillati</taxon>
        <taxon>Actinomycetota</taxon>
        <taxon>Actinomycetes</taxon>
        <taxon>Mycobacteriales</taxon>
        <taxon>Mycobacteriaceae</taxon>
        <taxon>Mycolicibacterium</taxon>
    </lineage>
</organism>
<keyword id="KW-0049">Antioxidant</keyword>
<keyword id="KW-1015">Disulfide bond</keyword>
<keyword id="KW-0560">Oxidoreductase</keyword>
<keyword id="KW-0575">Peroxidase</keyword>
<keyword id="KW-0676">Redox-active center</keyword>
<keyword id="KW-1185">Reference proteome</keyword>
<proteinExistence type="inferred from homology"/>
<protein>
    <recommendedName>
        <fullName evidence="2">Alkyl hydroperoxide reductase AhpD</fullName>
        <ecNumber evidence="2">1.11.1.28</ecNumber>
    </recommendedName>
    <alternativeName>
        <fullName evidence="2">Alkylhydroperoxidase AhpD</fullName>
    </alternativeName>
</protein>
<accession>Q50441</accession>
<accession>A0R1V8</accession>
<accession>I7GEB6</accession>
<reference key="1">
    <citation type="submission" date="2006-10" db="EMBL/GenBank/DDBJ databases">
        <authorList>
            <person name="Fleischmann R.D."/>
            <person name="Dodson R.J."/>
            <person name="Haft D.H."/>
            <person name="Merkel J.S."/>
            <person name="Nelson W.C."/>
            <person name="Fraser C.M."/>
        </authorList>
    </citation>
    <scope>NUCLEOTIDE SEQUENCE [LARGE SCALE GENOMIC DNA]</scope>
    <source>
        <strain>ATCC 700084 / mc(2)155</strain>
    </source>
</reference>
<reference key="2">
    <citation type="journal article" date="2007" name="Genome Biol.">
        <title>Interrupted coding sequences in Mycobacterium smegmatis: authentic mutations or sequencing errors?</title>
        <authorList>
            <person name="Deshayes C."/>
            <person name="Perrodou E."/>
            <person name="Gallien S."/>
            <person name="Euphrasie D."/>
            <person name="Schaeffer C."/>
            <person name="Van-Dorsselaer A."/>
            <person name="Poch O."/>
            <person name="Lecompte O."/>
            <person name="Reyrat J.-M."/>
        </authorList>
    </citation>
    <scope>NUCLEOTIDE SEQUENCE [LARGE SCALE GENOMIC DNA]</scope>
    <source>
        <strain>ATCC 700084 / mc(2)155</strain>
    </source>
</reference>
<reference key="3">
    <citation type="journal article" date="2009" name="Genome Res.">
        <title>Ortho-proteogenomics: multiple proteomes investigation through orthology and a new MS-based protocol.</title>
        <authorList>
            <person name="Gallien S."/>
            <person name="Perrodou E."/>
            <person name="Carapito C."/>
            <person name="Deshayes C."/>
            <person name="Reyrat J.-M."/>
            <person name="Van Dorsselaer A."/>
            <person name="Poch O."/>
            <person name="Schaeffer C."/>
            <person name="Lecompte O."/>
        </authorList>
    </citation>
    <scope>NUCLEOTIDE SEQUENCE [LARGE SCALE GENOMIC DNA]</scope>
    <source>
        <strain>ATCC 700084 / mc(2)155</strain>
    </source>
</reference>
<reference key="4">
    <citation type="journal article" date="1996" name="J. Bacteriol.">
        <title>Oxidative stress response and its role in sensitivity to isoniazid in mycobacteria: characterization and inducibility of ahpC by peroxides in Mycobacterium smegmatis and lack of expression in M. aurum and M. tuberculosis.</title>
        <authorList>
            <person name="Dhandayuthapani S."/>
            <person name="Zhang Y."/>
            <person name="Mudd M.H."/>
            <person name="Deretic V."/>
        </authorList>
    </citation>
    <scope>NUCLEOTIDE SEQUENCE [GENOMIC DNA] OF 1-55</scope>
</reference>
<sequence>MSIDNIKSALPEYAKDLKLNLGSIANTTELTEQQLWGALVATAAATKNARLLREISEDALDILSEEAYNAALGAAAIMGMNNVFYRTKGQLDGKYDDLRAGLRMNIIGNPGVAKEDFELWSLAVSAINGCGHCLAAHEKTLRDADVARTTIFEAIRLASIVSGVAQALLTADTLAAV</sequence>
<name>AHPD_MYCS2</name>